<comment type="function">
    <text evidence="1">Catalyzes the conversion of L-arabinose to L-ribulose.</text>
</comment>
<comment type="catalytic activity">
    <reaction evidence="1">
        <text>beta-L-arabinopyranose = L-ribulose</text>
        <dbReference type="Rhea" id="RHEA:14821"/>
        <dbReference type="ChEBI" id="CHEBI:16880"/>
        <dbReference type="ChEBI" id="CHEBI:40886"/>
        <dbReference type="EC" id="5.3.1.4"/>
    </reaction>
</comment>
<comment type="cofactor">
    <cofactor evidence="1">
        <name>Mn(2+)</name>
        <dbReference type="ChEBI" id="CHEBI:29035"/>
    </cofactor>
    <text evidence="1">Binds 1 Mn(2+) ion per subunit.</text>
</comment>
<comment type="pathway">
    <text evidence="1">Carbohydrate degradation; L-arabinose degradation via L-ribulose; D-xylulose 5-phosphate from L-arabinose (bacterial route): step 1/3.</text>
</comment>
<comment type="similarity">
    <text evidence="1">Belongs to the arabinose isomerase family.</text>
</comment>
<name>ARAA_LEVBA</name>
<proteinExistence type="inferred from homology"/>
<keyword id="KW-0054">Arabinose catabolism</keyword>
<keyword id="KW-0119">Carbohydrate metabolism</keyword>
<keyword id="KW-0413">Isomerase</keyword>
<keyword id="KW-0464">Manganese</keyword>
<keyword id="KW-0479">Metal-binding</keyword>
<keyword id="KW-1185">Reference proteome</keyword>
<evidence type="ECO:0000255" key="1">
    <source>
        <dbReference type="HAMAP-Rule" id="MF_00519"/>
    </source>
</evidence>
<dbReference type="EC" id="5.3.1.4" evidence="1"/>
<dbReference type="EMBL" id="CP000416">
    <property type="protein sequence ID" value="ABJ64807.1"/>
    <property type="molecule type" value="Genomic_DNA"/>
</dbReference>
<dbReference type="RefSeq" id="WP_011668359.1">
    <property type="nucleotide sequence ID" value="NC_008497.1"/>
</dbReference>
<dbReference type="SMR" id="Q03PR5"/>
<dbReference type="STRING" id="387344.LVIS_1740"/>
<dbReference type="KEGG" id="lbr:LVIS_1740"/>
<dbReference type="PATRIC" id="fig|387344.15.peg.1647"/>
<dbReference type="eggNOG" id="COG2160">
    <property type="taxonomic scope" value="Bacteria"/>
</dbReference>
<dbReference type="HOGENOM" id="CLU_045663_0_0_9"/>
<dbReference type="UniPathway" id="UPA00145">
    <property type="reaction ID" value="UER00565"/>
</dbReference>
<dbReference type="Proteomes" id="UP000001652">
    <property type="component" value="Chromosome"/>
</dbReference>
<dbReference type="GO" id="GO:0005829">
    <property type="term" value="C:cytosol"/>
    <property type="evidence" value="ECO:0007669"/>
    <property type="project" value="TreeGrafter"/>
</dbReference>
<dbReference type="GO" id="GO:0008733">
    <property type="term" value="F:L-arabinose isomerase activity"/>
    <property type="evidence" value="ECO:0007669"/>
    <property type="project" value="UniProtKB-UniRule"/>
</dbReference>
<dbReference type="GO" id="GO:0030145">
    <property type="term" value="F:manganese ion binding"/>
    <property type="evidence" value="ECO:0007669"/>
    <property type="project" value="UniProtKB-UniRule"/>
</dbReference>
<dbReference type="GO" id="GO:0019569">
    <property type="term" value="P:L-arabinose catabolic process to xylulose 5-phosphate"/>
    <property type="evidence" value="ECO:0007669"/>
    <property type="project" value="UniProtKB-UniRule"/>
</dbReference>
<dbReference type="Gene3D" id="3.40.50.10940">
    <property type="match status" value="1"/>
</dbReference>
<dbReference type="HAMAP" id="MF_00519">
    <property type="entry name" value="Arabinose_Isome"/>
    <property type="match status" value="1"/>
</dbReference>
<dbReference type="InterPro" id="IPR024664">
    <property type="entry name" value="Ara_Isoase_C"/>
</dbReference>
<dbReference type="InterPro" id="IPR055390">
    <property type="entry name" value="AraA_central"/>
</dbReference>
<dbReference type="InterPro" id="IPR055389">
    <property type="entry name" value="AraA_N"/>
</dbReference>
<dbReference type="InterPro" id="IPR038583">
    <property type="entry name" value="AraA_N_sf"/>
</dbReference>
<dbReference type="InterPro" id="IPR004216">
    <property type="entry name" value="Fuc/Ara_isomerase_C"/>
</dbReference>
<dbReference type="InterPro" id="IPR009015">
    <property type="entry name" value="Fucose_isomerase_N/cen_sf"/>
</dbReference>
<dbReference type="InterPro" id="IPR003762">
    <property type="entry name" value="Lara_isomerase"/>
</dbReference>
<dbReference type="NCBIfam" id="NF002795">
    <property type="entry name" value="PRK02929.1"/>
    <property type="match status" value="1"/>
</dbReference>
<dbReference type="PANTHER" id="PTHR38464">
    <property type="entry name" value="L-ARABINOSE ISOMERASE"/>
    <property type="match status" value="1"/>
</dbReference>
<dbReference type="PANTHER" id="PTHR38464:SF1">
    <property type="entry name" value="L-ARABINOSE ISOMERASE"/>
    <property type="match status" value="1"/>
</dbReference>
<dbReference type="Pfam" id="PF24856">
    <property type="entry name" value="AraA_central"/>
    <property type="match status" value="1"/>
</dbReference>
<dbReference type="Pfam" id="PF02610">
    <property type="entry name" value="AraA_N"/>
    <property type="match status" value="1"/>
</dbReference>
<dbReference type="Pfam" id="PF11762">
    <property type="entry name" value="Arabinose_Iso_C"/>
    <property type="match status" value="1"/>
</dbReference>
<dbReference type="PIRSF" id="PIRSF001478">
    <property type="entry name" value="L-ara_isomerase"/>
    <property type="match status" value="1"/>
</dbReference>
<dbReference type="SUPFAM" id="SSF50443">
    <property type="entry name" value="FucI/AraA C-terminal domain-like"/>
    <property type="match status" value="1"/>
</dbReference>
<dbReference type="SUPFAM" id="SSF53743">
    <property type="entry name" value="FucI/AraA N-terminal and middle domains"/>
    <property type="match status" value="1"/>
</dbReference>
<protein>
    <recommendedName>
        <fullName evidence="1">L-arabinose isomerase</fullName>
        <ecNumber evidence="1">5.3.1.4</ecNumber>
    </recommendedName>
</protein>
<sequence>MLSVPDYEFWFVTGSQHLYGEEQLKSVAKDAQDIADKLNASGKLPYKVVFKDVMTTAESITNFMKEVNYNDNVAGVITWMHTFSPAKNWIRGTELLQKPLLHLATQYLNNIPYADIDFDYMNLNQSAHGDREYAYINARLNVNNKIVYGYWGDEDVQDQIARWEDVAVAYNESFKVKVARFGDTMRNVAVTEGDKVEAQIKMGWTVDYYGIGDLVEEINKVSDADVDKEYADLESKYTMVQGDNDAETYKHSVRVQLQQYLGIKRFLEKGGYTAFTTNFEDLWGMEQLPGLAAQLLIRDGYGFGAEGDWKTAALGRVMKIMSHNDRTAFMEDYTLDLRKGHEAILGSHMLEVDPTIASDKPRVEVHPLDIGGKADPARLVFTGSEGDAIDVTVADFRDGFKMIGYAVDANKPEGETPNLPVAKQLWTPKVGLKTGALEWMKAGGGHHTMLSFSLTEEQMEDFATMVGMTKAFIK</sequence>
<gene>
    <name evidence="1" type="primary">araA</name>
    <name type="ordered locus">LVIS_1740</name>
</gene>
<accession>Q03PR5</accession>
<reference key="1">
    <citation type="journal article" date="2006" name="Proc. Natl. Acad. Sci. U.S.A.">
        <title>Comparative genomics of the lactic acid bacteria.</title>
        <authorList>
            <person name="Makarova K.S."/>
            <person name="Slesarev A."/>
            <person name="Wolf Y.I."/>
            <person name="Sorokin A."/>
            <person name="Mirkin B."/>
            <person name="Koonin E.V."/>
            <person name="Pavlov A."/>
            <person name="Pavlova N."/>
            <person name="Karamychev V."/>
            <person name="Polouchine N."/>
            <person name="Shakhova V."/>
            <person name="Grigoriev I."/>
            <person name="Lou Y."/>
            <person name="Rohksar D."/>
            <person name="Lucas S."/>
            <person name="Huang K."/>
            <person name="Goodstein D.M."/>
            <person name="Hawkins T."/>
            <person name="Plengvidhya V."/>
            <person name="Welker D."/>
            <person name="Hughes J."/>
            <person name="Goh Y."/>
            <person name="Benson A."/>
            <person name="Baldwin K."/>
            <person name="Lee J.-H."/>
            <person name="Diaz-Muniz I."/>
            <person name="Dosti B."/>
            <person name="Smeianov V."/>
            <person name="Wechter W."/>
            <person name="Barabote R."/>
            <person name="Lorca G."/>
            <person name="Altermann E."/>
            <person name="Barrangou R."/>
            <person name="Ganesan B."/>
            <person name="Xie Y."/>
            <person name="Rawsthorne H."/>
            <person name="Tamir D."/>
            <person name="Parker C."/>
            <person name="Breidt F."/>
            <person name="Broadbent J.R."/>
            <person name="Hutkins R."/>
            <person name="O'Sullivan D."/>
            <person name="Steele J."/>
            <person name="Unlu G."/>
            <person name="Saier M.H. Jr."/>
            <person name="Klaenhammer T."/>
            <person name="Richardson P."/>
            <person name="Kozyavkin S."/>
            <person name="Weimer B.C."/>
            <person name="Mills D.A."/>
        </authorList>
    </citation>
    <scope>NUCLEOTIDE SEQUENCE [LARGE SCALE GENOMIC DNA]</scope>
    <source>
        <strain>ATCC 367 / BCRC 12310 / CIP 105137 / JCM 1170 / LMG 11437 / NCIMB 947 / NCTC 947</strain>
    </source>
</reference>
<organism>
    <name type="scientific">Levilactobacillus brevis (strain ATCC 367 / BCRC 12310 / CIP 105137 / JCM 1170 / LMG 11437 / NCIMB 947 / NCTC 947)</name>
    <name type="common">Lactobacillus brevis</name>
    <dbReference type="NCBI Taxonomy" id="387344"/>
    <lineage>
        <taxon>Bacteria</taxon>
        <taxon>Bacillati</taxon>
        <taxon>Bacillota</taxon>
        <taxon>Bacilli</taxon>
        <taxon>Lactobacillales</taxon>
        <taxon>Lactobacillaceae</taxon>
        <taxon>Levilactobacillus</taxon>
    </lineage>
</organism>
<feature type="chain" id="PRO_0000312609" description="L-arabinose isomerase">
    <location>
        <begin position="1"/>
        <end position="474"/>
    </location>
</feature>
<feature type="binding site" evidence="1">
    <location>
        <position position="306"/>
    </location>
    <ligand>
        <name>Mn(2+)</name>
        <dbReference type="ChEBI" id="CHEBI:29035"/>
    </ligand>
</feature>
<feature type="binding site" evidence="1">
    <location>
        <position position="331"/>
    </location>
    <ligand>
        <name>Mn(2+)</name>
        <dbReference type="ChEBI" id="CHEBI:29035"/>
    </ligand>
</feature>
<feature type="binding site" evidence="1">
    <location>
        <position position="348"/>
    </location>
    <ligand>
        <name>Mn(2+)</name>
        <dbReference type="ChEBI" id="CHEBI:29035"/>
    </ligand>
</feature>
<feature type="binding site" evidence="1">
    <location>
        <position position="447"/>
    </location>
    <ligand>
        <name>Mn(2+)</name>
        <dbReference type="ChEBI" id="CHEBI:29035"/>
    </ligand>
</feature>